<name>HIS1_CUPTR</name>
<keyword id="KW-0028">Amino-acid biosynthesis</keyword>
<keyword id="KW-0067">ATP-binding</keyword>
<keyword id="KW-0963">Cytoplasm</keyword>
<keyword id="KW-0328">Glycosyltransferase</keyword>
<keyword id="KW-0368">Histidine biosynthesis</keyword>
<keyword id="KW-0547">Nucleotide-binding</keyword>
<keyword id="KW-0808">Transferase</keyword>
<accession>B3R7A1</accession>
<sequence length="224" mass="23946">MSPAFNASPNQLTLALSKGRIFTETLPLLEAAGIRVTEDPETSRKLILPTSDPAVRVVIVRASDVPTYVQYGAADFGVAGKDVLMENGMAGLYAPIDLNIARCRMSVAVPAGFDYANAVRQGARLAVATKYVQTAREHFAKKGVHVDLIKLYGSMELGPLVGLSDAIVDLVSTGSTLRANNLVEVEEIVQISSRLVVNQAALKLKRERLAPILDAFERASAALA</sequence>
<comment type="function">
    <text evidence="1">Catalyzes the condensation of ATP and 5-phosphoribose 1-diphosphate to form N'-(5'-phosphoribosyl)-ATP (PR-ATP). Has a crucial role in the pathway because the rate of histidine biosynthesis seems to be controlled primarily by regulation of HisG enzymatic activity.</text>
</comment>
<comment type="catalytic activity">
    <reaction evidence="1">
        <text>1-(5-phospho-beta-D-ribosyl)-ATP + diphosphate = 5-phospho-alpha-D-ribose 1-diphosphate + ATP</text>
        <dbReference type="Rhea" id="RHEA:18473"/>
        <dbReference type="ChEBI" id="CHEBI:30616"/>
        <dbReference type="ChEBI" id="CHEBI:33019"/>
        <dbReference type="ChEBI" id="CHEBI:58017"/>
        <dbReference type="ChEBI" id="CHEBI:73183"/>
        <dbReference type="EC" id="2.4.2.17"/>
    </reaction>
</comment>
<comment type="pathway">
    <text evidence="1">Amino-acid biosynthesis; L-histidine biosynthesis; L-histidine from 5-phospho-alpha-D-ribose 1-diphosphate: step 1/9.</text>
</comment>
<comment type="subunit">
    <text evidence="1">Heteromultimer composed of HisG and HisZ subunits.</text>
</comment>
<comment type="subcellular location">
    <subcellularLocation>
        <location evidence="1">Cytoplasm</location>
    </subcellularLocation>
</comment>
<comment type="domain">
    <text>Lacks the C-terminal regulatory region which is replaced by HisZ.</text>
</comment>
<comment type="similarity">
    <text evidence="1">Belongs to the ATP phosphoribosyltransferase family. Short subfamily.</text>
</comment>
<evidence type="ECO:0000255" key="1">
    <source>
        <dbReference type="HAMAP-Rule" id="MF_01018"/>
    </source>
</evidence>
<reference key="1">
    <citation type="journal article" date="2008" name="Genome Res.">
        <title>Genome sequence of the beta-rhizobium Cupriavidus taiwanensis and comparative genomics of rhizobia.</title>
        <authorList>
            <person name="Amadou C."/>
            <person name="Pascal G."/>
            <person name="Mangenot S."/>
            <person name="Glew M."/>
            <person name="Bontemps C."/>
            <person name="Capela D."/>
            <person name="Carrere S."/>
            <person name="Cruveiller S."/>
            <person name="Dossat C."/>
            <person name="Lajus A."/>
            <person name="Marchetti M."/>
            <person name="Poinsot V."/>
            <person name="Rouy Z."/>
            <person name="Servin B."/>
            <person name="Saad M."/>
            <person name="Schenowitz C."/>
            <person name="Barbe V."/>
            <person name="Batut J."/>
            <person name="Medigue C."/>
            <person name="Masson-Boivin C."/>
        </authorList>
    </citation>
    <scope>NUCLEOTIDE SEQUENCE [LARGE SCALE GENOMIC DNA]</scope>
    <source>
        <strain>DSM 17343 / BCRC 17206 / CCUG 44338 / CIP 107171 / LMG 19424 / R1</strain>
    </source>
</reference>
<dbReference type="EC" id="2.4.2.17" evidence="1"/>
<dbReference type="EMBL" id="CU633749">
    <property type="protein sequence ID" value="CAQ70801.1"/>
    <property type="molecule type" value="Genomic_DNA"/>
</dbReference>
<dbReference type="RefSeq" id="WP_012354092.1">
    <property type="nucleotide sequence ID" value="NC_010528.1"/>
</dbReference>
<dbReference type="SMR" id="B3R7A1"/>
<dbReference type="GeneID" id="29760740"/>
<dbReference type="KEGG" id="cti:RALTA_A2876"/>
<dbReference type="eggNOG" id="COG0040">
    <property type="taxonomic scope" value="Bacteria"/>
</dbReference>
<dbReference type="HOGENOM" id="CLU_038115_2_0_4"/>
<dbReference type="BioCyc" id="CTAI977880:RALTA_RS14015-MONOMER"/>
<dbReference type="UniPathway" id="UPA00031">
    <property type="reaction ID" value="UER00006"/>
</dbReference>
<dbReference type="Proteomes" id="UP000001692">
    <property type="component" value="Chromosome 1"/>
</dbReference>
<dbReference type="GO" id="GO:0005737">
    <property type="term" value="C:cytoplasm"/>
    <property type="evidence" value="ECO:0007669"/>
    <property type="project" value="UniProtKB-SubCell"/>
</dbReference>
<dbReference type="GO" id="GO:0005524">
    <property type="term" value="F:ATP binding"/>
    <property type="evidence" value="ECO:0007669"/>
    <property type="project" value="UniProtKB-KW"/>
</dbReference>
<dbReference type="GO" id="GO:0003879">
    <property type="term" value="F:ATP phosphoribosyltransferase activity"/>
    <property type="evidence" value="ECO:0007669"/>
    <property type="project" value="UniProtKB-UniRule"/>
</dbReference>
<dbReference type="GO" id="GO:0000105">
    <property type="term" value="P:L-histidine biosynthetic process"/>
    <property type="evidence" value="ECO:0007669"/>
    <property type="project" value="UniProtKB-UniRule"/>
</dbReference>
<dbReference type="CDD" id="cd13595">
    <property type="entry name" value="PBP2_HisGs"/>
    <property type="match status" value="1"/>
</dbReference>
<dbReference type="FunFam" id="3.40.190.10:FF:000011">
    <property type="entry name" value="ATP phosphoribosyltransferase"/>
    <property type="match status" value="1"/>
</dbReference>
<dbReference type="Gene3D" id="3.40.190.10">
    <property type="entry name" value="Periplasmic binding protein-like II"/>
    <property type="match status" value="2"/>
</dbReference>
<dbReference type="HAMAP" id="MF_01018">
    <property type="entry name" value="HisG_Short"/>
    <property type="match status" value="1"/>
</dbReference>
<dbReference type="InterPro" id="IPR013820">
    <property type="entry name" value="ATP_PRibTrfase_cat"/>
</dbReference>
<dbReference type="InterPro" id="IPR018198">
    <property type="entry name" value="ATP_PRibTrfase_CS"/>
</dbReference>
<dbReference type="InterPro" id="IPR001348">
    <property type="entry name" value="ATP_PRibTrfase_HisG"/>
</dbReference>
<dbReference type="InterPro" id="IPR024893">
    <property type="entry name" value="ATP_PRibTrfase_HisG_short"/>
</dbReference>
<dbReference type="NCBIfam" id="TIGR00070">
    <property type="entry name" value="hisG"/>
    <property type="match status" value="1"/>
</dbReference>
<dbReference type="PANTHER" id="PTHR21403:SF8">
    <property type="entry name" value="ATP PHOSPHORIBOSYLTRANSFERASE"/>
    <property type="match status" value="1"/>
</dbReference>
<dbReference type="PANTHER" id="PTHR21403">
    <property type="entry name" value="ATP PHOSPHORIBOSYLTRANSFERASE ATP-PRTASE"/>
    <property type="match status" value="1"/>
</dbReference>
<dbReference type="Pfam" id="PF01634">
    <property type="entry name" value="HisG"/>
    <property type="match status" value="1"/>
</dbReference>
<dbReference type="SUPFAM" id="SSF53850">
    <property type="entry name" value="Periplasmic binding protein-like II"/>
    <property type="match status" value="1"/>
</dbReference>
<dbReference type="PROSITE" id="PS01316">
    <property type="entry name" value="ATP_P_PHORIBOSYLTR"/>
    <property type="match status" value="1"/>
</dbReference>
<feature type="chain" id="PRO_1000135276" description="ATP phosphoribosyltransferase">
    <location>
        <begin position="1"/>
        <end position="224"/>
    </location>
</feature>
<proteinExistence type="inferred from homology"/>
<protein>
    <recommendedName>
        <fullName evidence="1">ATP phosphoribosyltransferase</fullName>
        <shortName evidence="1">ATP-PRT</shortName>
        <shortName evidence="1">ATP-PRTase</shortName>
        <ecNumber evidence="1">2.4.2.17</ecNumber>
    </recommendedName>
</protein>
<organism>
    <name type="scientific">Cupriavidus taiwanensis (strain DSM 17343 / BCRC 17206 / CCUG 44338 / CIP 107171 / LMG 19424 / R1)</name>
    <name type="common">Ralstonia taiwanensis (strain LMG 19424)</name>
    <dbReference type="NCBI Taxonomy" id="977880"/>
    <lineage>
        <taxon>Bacteria</taxon>
        <taxon>Pseudomonadati</taxon>
        <taxon>Pseudomonadota</taxon>
        <taxon>Betaproteobacteria</taxon>
        <taxon>Burkholderiales</taxon>
        <taxon>Burkholderiaceae</taxon>
        <taxon>Cupriavidus</taxon>
    </lineage>
</organism>
<gene>
    <name evidence="1" type="primary">hisG</name>
    <name type="ordered locus">RALTA_A2876</name>
</gene>